<proteinExistence type="inferred from homology"/>
<protein>
    <recommendedName>
        <fullName evidence="1">Ribonuclease HII</fullName>
        <shortName evidence="1">RNase HII</shortName>
        <ecNumber evidence="1">3.1.26.4</ecNumber>
    </recommendedName>
</protein>
<feature type="chain" id="PRO_0000111614" description="Ribonuclease HII">
    <location>
        <begin position="1"/>
        <end position="193"/>
    </location>
</feature>
<feature type="domain" description="RNase H type-2" evidence="2">
    <location>
        <begin position="15"/>
        <end position="193"/>
    </location>
</feature>
<feature type="binding site" evidence="1">
    <location>
        <position position="21"/>
    </location>
    <ligand>
        <name>a divalent metal cation</name>
        <dbReference type="ChEBI" id="CHEBI:60240"/>
    </ligand>
</feature>
<feature type="binding site" evidence="1">
    <location>
        <position position="22"/>
    </location>
    <ligand>
        <name>a divalent metal cation</name>
        <dbReference type="ChEBI" id="CHEBI:60240"/>
    </ligand>
</feature>
<feature type="binding site" evidence="1">
    <location>
        <position position="112"/>
    </location>
    <ligand>
        <name>a divalent metal cation</name>
        <dbReference type="ChEBI" id="CHEBI:60240"/>
    </ligand>
</feature>
<comment type="function">
    <text evidence="1">Endonuclease that specifically degrades the RNA of RNA-DNA hybrids.</text>
</comment>
<comment type="catalytic activity">
    <reaction evidence="1">
        <text>Endonucleolytic cleavage to 5'-phosphomonoester.</text>
        <dbReference type="EC" id="3.1.26.4"/>
    </reaction>
</comment>
<comment type="cofactor">
    <cofactor evidence="1">
        <name>Mn(2+)</name>
        <dbReference type="ChEBI" id="CHEBI:29035"/>
    </cofactor>
    <cofactor evidence="1">
        <name>Mg(2+)</name>
        <dbReference type="ChEBI" id="CHEBI:18420"/>
    </cofactor>
    <text evidence="1">Manganese or magnesium. Binds 1 divalent metal ion per monomer in the absence of substrate. May bind a second metal ion after substrate binding.</text>
</comment>
<comment type="subcellular location">
    <subcellularLocation>
        <location evidence="1">Cytoplasm</location>
    </subcellularLocation>
</comment>
<comment type="similarity">
    <text evidence="1">Belongs to the RNase HII family.</text>
</comment>
<name>RNH2_RICTY</name>
<dbReference type="EC" id="3.1.26.4" evidence="1"/>
<dbReference type="EMBL" id="AE017197">
    <property type="protein sequence ID" value="AAU03676.1"/>
    <property type="molecule type" value="Genomic_DNA"/>
</dbReference>
<dbReference type="RefSeq" id="WP_011190663.1">
    <property type="nucleotide sequence ID" value="NC_006142.1"/>
</dbReference>
<dbReference type="SMR" id="Q68XG6"/>
<dbReference type="KEGG" id="rty:RT0192"/>
<dbReference type="eggNOG" id="COG0164">
    <property type="taxonomic scope" value="Bacteria"/>
</dbReference>
<dbReference type="HOGENOM" id="CLU_036532_3_1_5"/>
<dbReference type="OrthoDB" id="9803420at2"/>
<dbReference type="Proteomes" id="UP000000604">
    <property type="component" value="Chromosome"/>
</dbReference>
<dbReference type="GO" id="GO:0005737">
    <property type="term" value="C:cytoplasm"/>
    <property type="evidence" value="ECO:0007669"/>
    <property type="project" value="UniProtKB-SubCell"/>
</dbReference>
<dbReference type="GO" id="GO:0032299">
    <property type="term" value="C:ribonuclease H2 complex"/>
    <property type="evidence" value="ECO:0007669"/>
    <property type="project" value="TreeGrafter"/>
</dbReference>
<dbReference type="GO" id="GO:0030145">
    <property type="term" value="F:manganese ion binding"/>
    <property type="evidence" value="ECO:0007669"/>
    <property type="project" value="UniProtKB-UniRule"/>
</dbReference>
<dbReference type="GO" id="GO:0003723">
    <property type="term" value="F:RNA binding"/>
    <property type="evidence" value="ECO:0007669"/>
    <property type="project" value="InterPro"/>
</dbReference>
<dbReference type="GO" id="GO:0004523">
    <property type="term" value="F:RNA-DNA hybrid ribonuclease activity"/>
    <property type="evidence" value="ECO:0007669"/>
    <property type="project" value="UniProtKB-UniRule"/>
</dbReference>
<dbReference type="GO" id="GO:0043137">
    <property type="term" value="P:DNA replication, removal of RNA primer"/>
    <property type="evidence" value="ECO:0007669"/>
    <property type="project" value="TreeGrafter"/>
</dbReference>
<dbReference type="GO" id="GO:0006298">
    <property type="term" value="P:mismatch repair"/>
    <property type="evidence" value="ECO:0007669"/>
    <property type="project" value="TreeGrafter"/>
</dbReference>
<dbReference type="CDD" id="cd07182">
    <property type="entry name" value="RNase_HII_bacteria_HII_like"/>
    <property type="match status" value="1"/>
</dbReference>
<dbReference type="Gene3D" id="3.30.420.10">
    <property type="entry name" value="Ribonuclease H-like superfamily/Ribonuclease H"/>
    <property type="match status" value="1"/>
</dbReference>
<dbReference type="HAMAP" id="MF_00052_B">
    <property type="entry name" value="RNase_HII_B"/>
    <property type="match status" value="1"/>
</dbReference>
<dbReference type="InterPro" id="IPR022898">
    <property type="entry name" value="RNase_HII"/>
</dbReference>
<dbReference type="InterPro" id="IPR001352">
    <property type="entry name" value="RNase_HII/HIII"/>
</dbReference>
<dbReference type="InterPro" id="IPR024567">
    <property type="entry name" value="RNase_HII/HIII_dom"/>
</dbReference>
<dbReference type="InterPro" id="IPR012337">
    <property type="entry name" value="RNaseH-like_sf"/>
</dbReference>
<dbReference type="InterPro" id="IPR036397">
    <property type="entry name" value="RNaseH_sf"/>
</dbReference>
<dbReference type="NCBIfam" id="NF000595">
    <property type="entry name" value="PRK00015.1-3"/>
    <property type="match status" value="1"/>
</dbReference>
<dbReference type="PANTHER" id="PTHR10954">
    <property type="entry name" value="RIBONUCLEASE H2 SUBUNIT A"/>
    <property type="match status" value="1"/>
</dbReference>
<dbReference type="PANTHER" id="PTHR10954:SF18">
    <property type="entry name" value="RIBONUCLEASE HII"/>
    <property type="match status" value="1"/>
</dbReference>
<dbReference type="Pfam" id="PF01351">
    <property type="entry name" value="RNase_HII"/>
    <property type="match status" value="1"/>
</dbReference>
<dbReference type="SUPFAM" id="SSF53098">
    <property type="entry name" value="Ribonuclease H-like"/>
    <property type="match status" value="1"/>
</dbReference>
<dbReference type="PROSITE" id="PS51975">
    <property type="entry name" value="RNASE_H_2"/>
    <property type="match status" value="1"/>
</dbReference>
<evidence type="ECO:0000255" key="1">
    <source>
        <dbReference type="HAMAP-Rule" id="MF_00052"/>
    </source>
</evidence>
<evidence type="ECO:0000255" key="2">
    <source>
        <dbReference type="PROSITE-ProRule" id="PRU01319"/>
    </source>
</evidence>
<accession>Q68XG6</accession>
<gene>
    <name evidence="1" type="primary">rnhB</name>
    <name type="ordered locus">RT0192</name>
</gene>
<reference key="1">
    <citation type="journal article" date="2004" name="J. Bacteriol.">
        <title>Complete genome sequence of Rickettsia typhi and comparison with sequences of other Rickettsiae.</title>
        <authorList>
            <person name="McLeod M.P."/>
            <person name="Qin X."/>
            <person name="Karpathy S.E."/>
            <person name="Gioia J."/>
            <person name="Highlander S.K."/>
            <person name="Fox G.E."/>
            <person name="McNeill T.Z."/>
            <person name="Jiang H."/>
            <person name="Muzny D."/>
            <person name="Jacob L.S."/>
            <person name="Hawes A.C."/>
            <person name="Sodergren E."/>
            <person name="Gill R."/>
            <person name="Hume J."/>
            <person name="Morgan M."/>
            <person name="Fan G."/>
            <person name="Amin A.G."/>
            <person name="Gibbs R.A."/>
            <person name="Hong C."/>
            <person name="Yu X.-J."/>
            <person name="Walker D.H."/>
            <person name="Weinstock G.M."/>
        </authorList>
    </citation>
    <scope>NUCLEOTIDE SEQUENCE [LARGE SCALE GENOMIC DNA]</scope>
    <source>
        <strain>ATCC VR-144 / Wilmington</strain>
    </source>
</reference>
<keyword id="KW-0963">Cytoplasm</keyword>
<keyword id="KW-0255">Endonuclease</keyword>
<keyword id="KW-0378">Hydrolase</keyword>
<keyword id="KW-0464">Manganese</keyword>
<keyword id="KW-0479">Metal-binding</keyword>
<keyword id="KW-0540">Nuclease</keyword>
<sequence length="193" mass="21680">MEVNLLQYEQKYHNYIVAGVDEAGRGSLVGPVVASAVIIDKVDIISGIKDSKKLSKNKRDILYEQITSNYVWSTAIIEHTEIDDINILEATKKACTIAVANLSLKPEKILVDGNMKFSDVRFISIINGDNLSLSIAAASIIAKVTRDRLMLELSAEYPQYLWHKNYGYGTREHIEAINTHGLSSYHRKSFKFC</sequence>
<organism>
    <name type="scientific">Rickettsia typhi (strain ATCC VR-144 / Wilmington)</name>
    <dbReference type="NCBI Taxonomy" id="257363"/>
    <lineage>
        <taxon>Bacteria</taxon>
        <taxon>Pseudomonadati</taxon>
        <taxon>Pseudomonadota</taxon>
        <taxon>Alphaproteobacteria</taxon>
        <taxon>Rickettsiales</taxon>
        <taxon>Rickettsiaceae</taxon>
        <taxon>Rickettsieae</taxon>
        <taxon>Rickettsia</taxon>
        <taxon>typhus group</taxon>
    </lineage>
</organism>